<dbReference type="SMR" id="P0DUE8"/>
<dbReference type="Proteomes" id="UP000515131">
    <property type="component" value="Unplaced"/>
</dbReference>
<dbReference type="GO" id="GO:0034364">
    <property type="term" value="C:high-density lipoprotein particle"/>
    <property type="evidence" value="ECO:0007669"/>
    <property type="project" value="TreeGrafter"/>
</dbReference>
<dbReference type="GO" id="GO:0034361">
    <property type="term" value="C:very-low-density lipoprotein particle"/>
    <property type="evidence" value="ECO:0007669"/>
    <property type="project" value="UniProtKB-KW"/>
</dbReference>
<dbReference type="GO" id="GO:0005504">
    <property type="term" value="F:fatty acid binding"/>
    <property type="evidence" value="ECO:0007669"/>
    <property type="project" value="TreeGrafter"/>
</dbReference>
<dbReference type="GO" id="GO:0004859">
    <property type="term" value="F:phospholipase inhibitor activity"/>
    <property type="evidence" value="ECO:0007669"/>
    <property type="project" value="TreeGrafter"/>
</dbReference>
<dbReference type="GO" id="GO:0006869">
    <property type="term" value="P:lipid transport"/>
    <property type="evidence" value="ECO:0007669"/>
    <property type="project" value="UniProtKB-KW"/>
</dbReference>
<dbReference type="GO" id="GO:0042157">
    <property type="term" value="P:lipoprotein metabolic process"/>
    <property type="evidence" value="ECO:0007669"/>
    <property type="project" value="InterPro"/>
</dbReference>
<dbReference type="GO" id="GO:0032375">
    <property type="term" value="P:negative regulation of cholesterol transport"/>
    <property type="evidence" value="ECO:0007669"/>
    <property type="project" value="TreeGrafter"/>
</dbReference>
<dbReference type="GO" id="GO:0050995">
    <property type="term" value="P:negative regulation of lipid catabolic process"/>
    <property type="evidence" value="ECO:0007669"/>
    <property type="project" value="TreeGrafter"/>
</dbReference>
<dbReference type="GO" id="GO:0010916">
    <property type="term" value="P:negative regulation of very-low-density lipoprotein particle clearance"/>
    <property type="evidence" value="ECO:0007669"/>
    <property type="project" value="TreeGrafter"/>
</dbReference>
<dbReference type="GO" id="GO:0006641">
    <property type="term" value="P:triglyceride metabolic process"/>
    <property type="evidence" value="ECO:0007669"/>
    <property type="project" value="TreeGrafter"/>
</dbReference>
<dbReference type="GO" id="GO:0034447">
    <property type="term" value="P:very-low-density lipoprotein particle clearance"/>
    <property type="evidence" value="ECO:0007669"/>
    <property type="project" value="TreeGrafter"/>
</dbReference>
<dbReference type="InterPro" id="IPR006781">
    <property type="entry name" value="ApoC-I"/>
</dbReference>
<dbReference type="PANTHER" id="PTHR16565">
    <property type="entry name" value="APOLIPOPROTEIN C-I"/>
    <property type="match status" value="1"/>
</dbReference>
<dbReference type="PANTHER" id="PTHR16565:SF2">
    <property type="entry name" value="APOLIPOPROTEIN C-I"/>
    <property type="match status" value="1"/>
</dbReference>
<accession>P0DUE8</accession>
<name>APOC1_PUMCO</name>
<proteinExistence type="inferred from homology"/>
<evidence type="ECO:0000250" key="1">
    <source>
        <dbReference type="UniProtKB" id="P02654"/>
    </source>
</evidence>
<evidence type="ECO:0000250" key="2">
    <source>
        <dbReference type="UniProtKB" id="P33047"/>
    </source>
</evidence>
<evidence type="ECO:0000250" key="3">
    <source>
        <dbReference type="UniProtKB" id="P86336"/>
    </source>
</evidence>
<evidence type="ECO:0000255" key="4"/>
<evidence type="ECO:0000305" key="5"/>
<reference key="1">
    <citation type="unpublished observations" date="2020-10">
        <authorList>
            <person name="Puppione D.L."/>
        </authorList>
    </citation>
    <scope>IDENTIFICATION</scope>
</reference>
<organism>
    <name type="scientific">Puma concolor</name>
    <name type="common">Mountain lion</name>
    <name type="synonym">Felis concolor</name>
    <dbReference type="NCBI Taxonomy" id="9696"/>
    <lineage>
        <taxon>Eukaryota</taxon>
        <taxon>Metazoa</taxon>
        <taxon>Chordata</taxon>
        <taxon>Craniata</taxon>
        <taxon>Vertebrata</taxon>
        <taxon>Euteleostomi</taxon>
        <taxon>Mammalia</taxon>
        <taxon>Eutheria</taxon>
        <taxon>Laurasiatheria</taxon>
        <taxon>Carnivora</taxon>
        <taxon>Feliformia</taxon>
        <taxon>Felidae</taxon>
        <taxon>Felinae</taxon>
        <taxon>Puma</taxon>
    </lineage>
</organism>
<feature type="signal peptide" evidence="4">
    <location>
        <begin position="1"/>
        <end position="26"/>
    </location>
</feature>
<feature type="chain" id="PRO_0000451961" description="Apolipoprotein C-I">
    <location>
        <begin position="27"/>
        <end position="78"/>
    </location>
</feature>
<feature type="chain" id="PRO_0000451962" description="Truncated apolipoprotein C-I" evidence="3">
    <location>
        <begin position="29"/>
        <end position="78"/>
    </location>
</feature>
<keyword id="KW-0445">Lipid transport</keyword>
<keyword id="KW-1185">Reference proteome</keyword>
<keyword id="KW-0964">Secreted</keyword>
<keyword id="KW-0732">Signal</keyword>
<keyword id="KW-0813">Transport</keyword>
<keyword id="KW-0850">VLDL</keyword>
<comment type="function">
    <text evidence="1 2">Inhibitor of lipoprotein binding to the low density lipoprotein (LDL) receptor, LDL receptor-related protein, and very low density lipoprotein (VLDL) receptor. Associates with high density lipoproteins (HDL) and the triacylglycerol-rich lipoproteins in the plasma and makes up about 10% of the protein of the VLDL and 2% of that of HDL. Appears to interfere directly with fatty acid uptake and is also the major plasma inhibitor of cholesteryl ester transfer protein (CETP). Binds free fatty acids and reduces their intracellular esterification. Modulates the interaction of APOE with beta-migrating VLDL and inhibits binding of beta-VLDL to the LDL receptor-related protein.</text>
</comment>
<comment type="subcellular location">
    <subcellularLocation>
        <location evidence="1">Secreted</location>
    </subcellularLocation>
</comment>
<comment type="similarity">
    <text evidence="5">Belongs to the apolipoprotein C1 family.</text>
</comment>
<protein>
    <recommendedName>
        <fullName>Apolipoprotein C-I</fullName>
        <shortName>Apo-CI</shortName>
        <shortName>ApoC-I</shortName>
    </recommendedName>
    <alternativeName>
        <fullName>Apolipoprotein C1</fullName>
    </alternativeName>
    <component>
        <recommendedName>
            <fullName>Truncated apolipoprotein C-I</fullName>
        </recommendedName>
    </component>
</protein>
<sequence length="78" mass="8609">MRLILWLPVLVVVLLMVLEGPAPAQGAPDIAGTFRNIPNSLKEFGNNLKDAFESIPEATRKLMTSFAEGLKNFRIPMV</sequence>
<gene>
    <name type="primary">APOC1</name>
</gene>